<protein>
    <recommendedName>
        <fullName>Type IV secretion system protein virB2</fullName>
    </recommendedName>
</protein>
<sequence length="105" mass="11107">MKTASPSKKSLSRILPHLLLALIVSIAAIEPNLAHANGGLDKVNTSMQKVLDLLSGVSITIVTIAIIWSGYKMAFRHARFMDVVPVLGGALVVGAAAEIASYLLR</sequence>
<feature type="signal peptide" evidence="1">
    <location>
        <begin position="1"/>
        <end position="36"/>
    </location>
</feature>
<feature type="chain" id="PRO_0000291449" description="Type IV secretion system protein virB2">
    <location>
        <begin position="37"/>
        <end position="105"/>
    </location>
</feature>
<feature type="transmembrane region" description="Helical" evidence="1">
    <location>
        <begin position="50"/>
        <end position="70"/>
    </location>
</feature>
<feature type="transmembrane region" description="Helical" evidence="1">
    <location>
        <begin position="83"/>
        <end position="103"/>
    </location>
</feature>
<name>VIRB2_BRUA2</name>
<organism>
    <name type="scientific">Brucella abortus (strain 2308)</name>
    <dbReference type="NCBI Taxonomy" id="359391"/>
    <lineage>
        <taxon>Bacteria</taxon>
        <taxon>Pseudomonadati</taxon>
        <taxon>Pseudomonadota</taxon>
        <taxon>Alphaproteobacteria</taxon>
        <taxon>Hyphomicrobiales</taxon>
        <taxon>Brucellaceae</taxon>
        <taxon>Brucella/Ochrobactrum group</taxon>
        <taxon>Brucella</taxon>
    </lineage>
</organism>
<proteinExistence type="inferred from homology"/>
<reference key="1">
    <citation type="journal article" date="2000" name="J. Bacteriol.">
        <title>A homologue of an operon required for DNA transfer in Agrobacterium is required in Brucella abortus for virulence and intracellular multiplication.</title>
        <authorList>
            <person name="Sieira R."/>
            <person name="Comerci D.J."/>
            <person name="Sanchez D.O."/>
            <person name="Ugalde R.A."/>
        </authorList>
    </citation>
    <scope>NUCLEOTIDE SEQUENCE [GENOMIC DNA]</scope>
    <scope>TRANSCRIPTION</scope>
    <scope>FUNCTION</scope>
</reference>
<reference key="2">
    <citation type="journal article" date="2005" name="Infect. Immun.">
        <title>Whole-genome analyses of speciation events in pathogenic Brucellae.</title>
        <authorList>
            <person name="Chain P.S."/>
            <person name="Comerci D.J."/>
            <person name="Tolmasky M.E."/>
            <person name="Larimer F.W."/>
            <person name="Malfatti S.A."/>
            <person name="Vergez L.M."/>
            <person name="Aguero F."/>
            <person name="Land M.L."/>
            <person name="Ugalde R.A."/>
            <person name="Garcia E."/>
        </authorList>
    </citation>
    <scope>NUCLEOTIDE SEQUENCE [LARGE SCALE GENOMIC DNA]</scope>
    <source>
        <strain>2308</strain>
    </source>
</reference>
<gene>
    <name type="primary">virB2</name>
    <name type="ordered locus">BAB2_0067</name>
</gene>
<comment type="function">
    <text evidence="2">The virB operon is essential for intracellular survival and is not involved in the invasion process. Constitutes a major determinant of virulence in mice.</text>
</comment>
<comment type="subcellular location">
    <subcellularLocation>
        <location evidence="3">Cell membrane</location>
        <topology evidence="3">Multi-pass membrane protein</topology>
    </subcellularLocation>
</comment>
<comment type="miscellaneous">
    <text>Transcription is turned on at the beginning of the stationary phase of vegetative growth.</text>
</comment>
<comment type="similarity">
    <text evidence="3">Belongs to the PtlA family.</text>
</comment>
<dbReference type="EMBL" id="AF226278">
    <property type="protein sequence ID" value="AAF73895.1"/>
    <property type="molecule type" value="Genomic_DNA"/>
</dbReference>
<dbReference type="EMBL" id="AM040265">
    <property type="protein sequence ID" value="CAJ12233.1"/>
    <property type="molecule type" value="Genomic_DNA"/>
</dbReference>
<dbReference type="RefSeq" id="WP_002967165.1">
    <property type="nucleotide sequence ID" value="NZ_KN046823.1"/>
</dbReference>
<dbReference type="SMR" id="Q2YIT6"/>
<dbReference type="STRING" id="359391.BAB2_0067"/>
<dbReference type="KEGG" id="bmf:BAB2_0067"/>
<dbReference type="PATRIC" id="fig|359391.11.peg.2014"/>
<dbReference type="HOGENOM" id="CLU_155084_1_1_5"/>
<dbReference type="BioCyc" id="MetaCyc:BAB_RS26680-MONOMER"/>
<dbReference type="PHI-base" id="PHI:7605"/>
<dbReference type="PRO" id="PR:Q2YIT6"/>
<dbReference type="Proteomes" id="UP000002719">
    <property type="component" value="Chromosome II"/>
</dbReference>
<dbReference type="GO" id="GO:0005886">
    <property type="term" value="C:plasma membrane"/>
    <property type="evidence" value="ECO:0007669"/>
    <property type="project" value="UniProtKB-SubCell"/>
</dbReference>
<dbReference type="InterPro" id="IPR007039">
    <property type="entry name" value="TrbC/VirB2"/>
</dbReference>
<dbReference type="Pfam" id="PF04956">
    <property type="entry name" value="TrbC"/>
    <property type="match status" value="1"/>
</dbReference>
<keyword id="KW-1003">Cell membrane</keyword>
<keyword id="KW-0472">Membrane</keyword>
<keyword id="KW-1185">Reference proteome</keyword>
<keyword id="KW-0732">Signal</keyword>
<keyword id="KW-0812">Transmembrane</keyword>
<keyword id="KW-1133">Transmembrane helix</keyword>
<keyword id="KW-0843">Virulence</keyword>
<accession>Q2YIT6</accession>
<accession>Q57A15</accession>
<accession>Q7BMZ9</accession>
<evidence type="ECO:0000255" key="1"/>
<evidence type="ECO:0000269" key="2">
    <source>
    </source>
</evidence>
<evidence type="ECO:0000305" key="3"/>